<reference key="1">
    <citation type="journal article" date="2004" name="Proc. Natl. Acad. Sci. U.S.A.">
        <title>Genome sequence of the deep-sea gamma-proteobacterium Idiomarina loihiensis reveals amino acid fermentation as a source of carbon and energy.</title>
        <authorList>
            <person name="Hou S."/>
            <person name="Saw J.H."/>
            <person name="Lee K.S."/>
            <person name="Freitas T.A."/>
            <person name="Belisle C."/>
            <person name="Kawarabayasi Y."/>
            <person name="Donachie S.P."/>
            <person name="Pikina A."/>
            <person name="Galperin M.Y."/>
            <person name="Koonin E.V."/>
            <person name="Makarova K.S."/>
            <person name="Omelchenko M.V."/>
            <person name="Sorokin A."/>
            <person name="Wolf Y.I."/>
            <person name="Li Q.X."/>
            <person name="Keum Y.S."/>
            <person name="Campbell S."/>
            <person name="Denery J."/>
            <person name="Aizawa S."/>
            <person name="Shibata S."/>
            <person name="Malahoff A."/>
            <person name="Alam M."/>
        </authorList>
    </citation>
    <scope>NUCLEOTIDE SEQUENCE [LARGE SCALE GENOMIC DNA]</scope>
    <source>
        <strain>ATCC BAA-735 / DSM 15497 / L2-TR</strain>
    </source>
</reference>
<protein>
    <recommendedName>
        <fullName evidence="1">Orotidine 5'-phosphate decarboxylase</fullName>
        <ecNumber evidence="1">4.1.1.23</ecNumber>
    </recommendedName>
    <alternativeName>
        <fullName evidence="1">OMP decarboxylase</fullName>
        <shortName evidence="1">OMPDCase</shortName>
        <shortName evidence="1">OMPdecase</shortName>
    </alternativeName>
</protein>
<proteinExistence type="inferred from homology"/>
<feature type="chain" id="PRO_0000241866" description="Orotidine 5'-phosphate decarboxylase">
    <location>
        <begin position="1"/>
        <end position="231"/>
    </location>
</feature>
<feature type="active site" description="Proton donor" evidence="1">
    <location>
        <position position="62"/>
    </location>
</feature>
<feature type="binding site" evidence="1">
    <location>
        <position position="11"/>
    </location>
    <ligand>
        <name>substrate</name>
    </ligand>
</feature>
<feature type="binding site" evidence="1">
    <location>
        <position position="33"/>
    </location>
    <ligand>
        <name>substrate</name>
    </ligand>
</feature>
<feature type="binding site" evidence="1">
    <location>
        <begin position="60"/>
        <end position="69"/>
    </location>
    <ligand>
        <name>substrate</name>
    </ligand>
</feature>
<feature type="binding site" evidence="1">
    <location>
        <position position="119"/>
    </location>
    <ligand>
        <name>substrate</name>
    </ligand>
</feature>
<feature type="binding site" evidence="1">
    <location>
        <position position="180"/>
    </location>
    <ligand>
        <name>substrate</name>
    </ligand>
</feature>
<feature type="binding site" evidence="1">
    <location>
        <position position="189"/>
    </location>
    <ligand>
        <name>substrate</name>
    </ligand>
</feature>
<feature type="binding site" evidence="1">
    <location>
        <position position="209"/>
    </location>
    <ligand>
        <name>substrate</name>
    </ligand>
</feature>
<feature type="binding site" evidence="1">
    <location>
        <position position="210"/>
    </location>
    <ligand>
        <name>substrate</name>
    </ligand>
</feature>
<keyword id="KW-0210">Decarboxylase</keyword>
<keyword id="KW-0456">Lyase</keyword>
<keyword id="KW-0665">Pyrimidine biosynthesis</keyword>
<keyword id="KW-1185">Reference proteome</keyword>
<dbReference type="EC" id="4.1.1.23" evidence="1"/>
<dbReference type="EMBL" id="AE017340">
    <property type="protein sequence ID" value="AAV82191.1"/>
    <property type="molecule type" value="Genomic_DNA"/>
</dbReference>
<dbReference type="RefSeq" id="WP_011234597.1">
    <property type="nucleotide sequence ID" value="NC_006512.1"/>
</dbReference>
<dbReference type="SMR" id="Q5QZ42"/>
<dbReference type="STRING" id="283942.IL1351"/>
<dbReference type="GeneID" id="41336527"/>
<dbReference type="KEGG" id="ilo:IL1351"/>
<dbReference type="eggNOG" id="COG0284">
    <property type="taxonomic scope" value="Bacteria"/>
</dbReference>
<dbReference type="HOGENOM" id="CLU_067069_0_0_6"/>
<dbReference type="OrthoDB" id="9806203at2"/>
<dbReference type="UniPathway" id="UPA00070">
    <property type="reaction ID" value="UER00120"/>
</dbReference>
<dbReference type="Proteomes" id="UP000001171">
    <property type="component" value="Chromosome"/>
</dbReference>
<dbReference type="GO" id="GO:0005829">
    <property type="term" value="C:cytosol"/>
    <property type="evidence" value="ECO:0007669"/>
    <property type="project" value="TreeGrafter"/>
</dbReference>
<dbReference type="GO" id="GO:0004590">
    <property type="term" value="F:orotidine-5'-phosphate decarboxylase activity"/>
    <property type="evidence" value="ECO:0007669"/>
    <property type="project" value="UniProtKB-UniRule"/>
</dbReference>
<dbReference type="GO" id="GO:0006207">
    <property type="term" value="P:'de novo' pyrimidine nucleobase biosynthetic process"/>
    <property type="evidence" value="ECO:0007669"/>
    <property type="project" value="InterPro"/>
</dbReference>
<dbReference type="GO" id="GO:0044205">
    <property type="term" value="P:'de novo' UMP biosynthetic process"/>
    <property type="evidence" value="ECO:0007669"/>
    <property type="project" value="UniProtKB-UniRule"/>
</dbReference>
<dbReference type="CDD" id="cd04725">
    <property type="entry name" value="OMP_decarboxylase_like"/>
    <property type="match status" value="1"/>
</dbReference>
<dbReference type="FunFam" id="3.20.20.70:FF:000015">
    <property type="entry name" value="Orotidine 5'-phosphate decarboxylase"/>
    <property type="match status" value="1"/>
</dbReference>
<dbReference type="Gene3D" id="3.20.20.70">
    <property type="entry name" value="Aldolase class I"/>
    <property type="match status" value="1"/>
</dbReference>
<dbReference type="HAMAP" id="MF_01200_B">
    <property type="entry name" value="OMPdecase_type1_B"/>
    <property type="match status" value="1"/>
</dbReference>
<dbReference type="InterPro" id="IPR013785">
    <property type="entry name" value="Aldolase_TIM"/>
</dbReference>
<dbReference type="InterPro" id="IPR014732">
    <property type="entry name" value="OMPdecase"/>
</dbReference>
<dbReference type="InterPro" id="IPR018089">
    <property type="entry name" value="OMPdecase_AS"/>
</dbReference>
<dbReference type="InterPro" id="IPR047596">
    <property type="entry name" value="OMPdecase_bac"/>
</dbReference>
<dbReference type="InterPro" id="IPR001754">
    <property type="entry name" value="OMPdeCOase_dom"/>
</dbReference>
<dbReference type="InterPro" id="IPR011060">
    <property type="entry name" value="RibuloseP-bd_barrel"/>
</dbReference>
<dbReference type="NCBIfam" id="NF001273">
    <property type="entry name" value="PRK00230.1"/>
    <property type="match status" value="1"/>
</dbReference>
<dbReference type="NCBIfam" id="TIGR01740">
    <property type="entry name" value="pyrF"/>
    <property type="match status" value="1"/>
</dbReference>
<dbReference type="PANTHER" id="PTHR32119">
    <property type="entry name" value="OROTIDINE 5'-PHOSPHATE DECARBOXYLASE"/>
    <property type="match status" value="1"/>
</dbReference>
<dbReference type="PANTHER" id="PTHR32119:SF2">
    <property type="entry name" value="OROTIDINE 5'-PHOSPHATE DECARBOXYLASE"/>
    <property type="match status" value="1"/>
</dbReference>
<dbReference type="Pfam" id="PF00215">
    <property type="entry name" value="OMPdecase"/>
    <property type="match status" value="1"/>
</dbReference>
<dbReference type="SMART" id="SM00934">
    <property type="entry name" value="OMPdecase"/>
    <property type="match status" value="1"/>
</dbReference>
<dbReference type="SUPFAM" id="SSF51366">
    <property type="entry name" value="Ribulose-phoshate binding barrel"/>
    <property type="match status" value="1"/>
</dbReference>
<dbReference type="PROSITE" id="PS00156">
    <property type="entry name" value="OMPDECASE"/>
    <property type="match status" value="1"/>
</dbReference>
<organism>
    <name type="scientific">Idiomarina loihiensis (strain ATCC BAA-735 / DSM 15497 / L2-TR)</name>
    <dbReference type="NCBI Taxonomy" id="283942"/>
    <lineage>
        <taxon>Bacteria</taxon>
        <taxon>Pseudomonadati</taxon>
        <taxon>Pseudomonadota</taxon>
        <taxon>Gammaproteobacteria</taxon>
        <taxon>Alteromonadales</taxon>
        <taxon>Idiomarinaceae</taxon>
        <taxon>Idiomarina</taxon>
    </lineage>
</organism>
<evidence type="ECO:0000255" key="1">
    <source>
        <dbReference type="HAMAP-Rule" id="MF_01200"/>
    </source>
</evidence>
<comment type="function">
    <text evidence="1">Catalyzes the decarboxylation of orotidine 5'-monophosphate (OMP) to uridine 5'-monophosphate (UMP).</text>
</comment>
<comment type="catalytic activity">
    <reaction evidence="1">
        <text>orotidine 5'-phosphate + H(+) = UMP + CO2</text>
        <dbReference type="Rhea" id="RHEA:11596"/>
        <dbReference type="ChEBI" id="CHEBI:15378"/>
        <dbReference type="ChEBI" id="CHEBI:16526"/>
        <dbReference type="ChEBI" id="CHEBI:57538"/>
        <dbReference type="ChEBI" id="CHEBI:57865"/>
        <dbReference type="EC" id="4.1.1.23"/>
    </reaction>
</comment>
<comment type="pathway">
    <text evidence="1">Pyrimidine metabolism; UMP biosynthesis via de novo pathway; UMP from orotate: step 2/2.</text>
</comment>
<comment type="subunit">
    <text evidence="1">Homodimer.</text>
</comment>
<comment type="similarity">
    <text evidence="1">Belongs to the OMP decarboxylase family. Type 1 subfamily.</text>
</comment>
<gene>
    <name evidence="1" type="primary">pyrF</name>
    <name type="ordered locus">IL1351</name>
</gene>
<accession>Q5QZ42</accession>
<name>PYRF_IDILO</name>
<sequence>MALPKIYVALDCQTQEAADNLVSQLPAGKVGLKVGKELFTAIGPDWVKKQVEQGFSVFLDLKFHDIPNTVAKAVTSAAKIGVDIVNVHASGGTEMMSAARDALKQFDKPPLLIAVTVLTSMSDSDLNEIGIQATAEQQVLKLAKLAQQAGLNGVVCSAQEARMLKHDLGTSFKLVTPGIRPANSATGDQKRVMTPEAAIEAGVDYMVIGRPITQAADPTASVAEILTSIGE</sequence>